<sequence>MVVAVYPGTFDPLTRGHEDLVRRASSIFDTLVVGVADSRAKKPFFSLEERLTIANEVLGHYPNVKVMSFTGLLKDFVRVNNARVIVRGLRAVSDFEYEFQMAGMNRYLLPDVETMFMTPSDQYQFISGTIVREIAQLGGDVSKFVFPSVEKWLTEKVTAMGGPAA</sequence>
<organism>
    <name type="scientific">Burkholderia cenocepacia (strain HI2424)</name>
    <dbReference type="NCBI Taxonomy" id="331272"/>
    <lineage>
        <taxon>Bacteria</taxon>
        <taxon>Pseudomonadati</taxon>
        <taxon>Pseudomonadota</taxon>
        <taxon>Betaproteobacteria</taxon>
        <taxon>Burkholderiales</taxon>
        <taxon>Burkholderiaceae</taxon>
        <taxon>Burkholderia</taxon>
        <taxon>Burkholderia cepacia complex</taxon>
    </lineage>
</organism>
<reference key="1">
    <citation type="submission" date="2006-08" db="EMBL/GenBank/DDBJ databases">
        <title>Complete sequence of chromosome 1 of Burkholderia cenocepacia HI2424.</title>
        <authorList>
            <person name="Copeland A."/>
            <person name="Lucas S."/>
            <person name="Lapidus A."/>
            <person name="Barry K."/>
            <person name="Detter J.C."/>
            <person name="Glavina del Rio T."/>
            <person name="Hammon N."/>
            <person name="Israni S."/>
            <person name="Pitluck S."/>
            <person name="Chain P."/>
            <person name="Malfatti S."/>
            <person name="Shin M."/>
            <person name="Vergez L."/>
            <person name="Schmutz J."/>
            <person name="Larimer F."/>
            <person name="Land M."/>
            <person name="Hauser L."/>
            <person name="Kyrpides N."/>
            <person name="Kim E."/>
            <person name="LiPuma J.J."/>
            <person name="Gonzalez C.F."/>
            <person name="Konstantinidis K."/>
            <person name="Tiedje J.M."/>
            <person name="Richardson P."/>
        </authorList>
    </citation>
    <scope>NUCLEOTIDE SEQUENCE [LARGE SCALE GENOMIC DNA]</scope>
    <source>
        <strain>HI2424</strain>
    </source>
</reference>
<feature type="chain" id="PRO_1000011104" description="Phosphopantetheine adenylyltransferase">
    <location>
        <begin position="1"/>
        <end position="165"/>
    </location>
</feature>
<feature type="binding site" evidence="1">
    <location>
        <begin position="9"/>
        <end position="10"/>
    </location>
    <ligand>
        <name>ATP</name>
        <dbReference type="ChEBI" id="CHEBI:30616"/>
    </ligand>
</feature>
<feature type="binding site" evidence="1">
    <location>
        <position position="9"/>
    </location>
    <ligand>
        <name>substrate</name>
    </ligand>
</feature>
<feature type="binding site" evidence="1">
    <location>
        <position position="17"/>
    </location>
    <ligand>
        <name>ATP</name>
        <dbReference type="ChEBI" id="CHEBI:30616"/>
    </ligand>
</feature>
<feature type="binding site" evidence="1">
    <location>
        <position position="41"/>
    </location>
    <ligand>
        <name>substrate</name>
    </ligand>
</feature>
<feature type="binding site" evidence="1">
    <location>
        <position position="73"/>
    </location>
    <ligand>
        <name>substrate</name>
    </ligand>
</feature>
<feature type="binding site" evidence="1">
    <location>
        <position position="87"/>
    </location>
    <ligand>
        <name>substrate</name>
    </ligand>
</feature>
<feature type="binding site" evidence="1">
    <location>
        <begin position="88"/>
        <end position="90"/>
    </location>
    <ligand>
        <name>ATP</name>
        <dbReference type="ChEBI" id="CHEBI:30616"/>
    </ligand>
</feature>
<feature type="binding site" evidence="1">
    <location>
        <position position="98"/>
    </location>
    <ligand>
        <name>ATP</name>
        <dbReference type="ChEBI" id="CHEBI:30616"/>
    </ligand>
</feature>
<feature type="binding site" evidence="1">
    <location>
        <begin position="123"/>
        <end position="129"/>
    </location>
    <ligand>
        <name>ATP</name>
        <dbReference type="ChEBI" id="CHEBI:30616"/>
    </ligand>
</feature>
<feature type="site" description="Transition state stabilizer" evidence="1">
    <location>
        <position position="17"/>
    </location>
</feature>
<evidence type="ECO:0000255" key="1">
    <source>
        <dbReference type="HAMAP-Rule" id="MF_00151"/>
    </source>
</evidence>
<gene>
    <name evidence="1" type="primary">coaD</name>
    <name type="ordered locus">Bcen2424_2807</name>
</gene>
<dbReference type="EC" id="2.7.7.3" evidence="1"/>
<dbReference type="EMBL" id="CP000458">
    <property type="protein sequence ID" value="ABK09557.1"/>
    <property type="molecule type" value="Genomic_DNA"/>
</dbReference>
<dbReference type="RefSeq" id="WP_006477773.1">
    <property type="nucleotide sequence ID" value="NC_008542.1"/>
</dbReference>
<dbReference type="SMR" id="A0KAN0"/>
<dbReference type="GeneID" id="83049603"/>
<dbReference type="KEGG" id="bch:Bcen2424_2807"/>
<dbReference type="HOGENOM" id="CLU_100149_0_1_4"/>
<dbReference type="UniPathway" id="UPA00241">
    <property type="reaction ID" value="UER00355"/>
</dbReference>
<dbReference type="GO" id="GO:0005737">
    <property type="term" value="C:cytoplasm"/>
    <property type="evidence" value="ECO:0007669"/>
    <property type="project" value="UniProtKB-SubCell"/>
</dbReference>
<dbReference type="GO" id="GO:0005524">
    <property type="term" value="F:ATP binding"/>
    <property type="evidence" value="ECO:0007669"/>
    <property type="project" value="UniProtKB-KW"/>
</dbReference>
<dbReference type="GO" id="GO:0004595">
    <property type="term" value="F:pantetheine-phosphate adenylyltransferase activity"/>
    <property type="evidence" value="ECO:0007669"/>
    <property type="project" value="UniProtKB-UniRule"/>
</dbReference>
<dbReference type="GO" id="GO:0015937">
    <property type="term" value="P:coenzyme A biosynthetic process"/>
    <property type="evidence" value="ECO:0007669"/>
    <property type="project" value="UniProtKB-UniRule"/>
</dbReference>
<dbReference type="CDD" id="cd02163">
    <property type="entry name" value="PPAT"/>
    <property type="match status" value="1"/>
</dbReference>
<dbReference type="Gene3D" id="3.40.50.620">
    <property type="entry name" value="HUPs"/>
    <property type="match status" value="1"/>
</dbReference>
<dbReference type="HAMAP" id="MF_00151">
    <property type="entry name" value="PPAT_bact"/>
    <property type="match status" value="1"/>
</dbReference>
<dbReference type="InterPro" id="IPR004821">
    <property type="entry name" value="Cyt_trans-like"/>
</dbReference>
<dbReference type="InterPro" id="IPR001980">
    <property type="entry name" value="PPAT"/>
</dbReference>
<dbReference type="InterPro" id="IPR014729">
    <property type="entry name" value="Rossmann-like_a/b/a_fold"/>
</dbReference>
<dbReference type="NCBIfam" id="TIGR01510">
    <property type="entry name" value="coaD_prev_kdtB"/>
    <property type="match status" value="1"/>
</dbReference>
<dbReference type="NCBIfam" id="TIGR00125">
    <property type="entry name" value="cyt_tran_rel"/>
    <property type="match status" value="1"/>
</dbReference>
<dbReference type="PANTHER" id="PTHR21342">
    <property type="entry name" value="PHOSPHOPANTETHEINE ADENYLYLTRANSFERASE"/>
    <property type="match status" value="1"/>
</dbReference>
<dbReference type="PANTHER" id="PTHR21342:SF1">
    <property type="entry name" value="PHOSPHOPANTETHEINE ADENYLYLTRANSFERASE"/>
    <property type="match status" value="1"/>
</dbReference>
<dbReference type="Pfam" id="PF01467">
    <property type="entry name" value="CTP_transf_like"/>
    <property type="match status" value="1"/>
</dbReference>
<dbReference type="PRINTS" id="PR01020">
    <property type="entry name" value="LPSBIOSNTHSS"/>
</dbReference>
<dbReference type="SUPFAM" id="SSF52374">
    <property type="entry name" value="Nucleotidylyl transferase"/>
    <property type="match status" value="1"/>
</dbReference>
<accession>A0KAN0</accession>
<proteinExistence type="inferred from homology"/>
<comment type="function">
    <text evidence="1">Reversibly transfers an adenylyl group from ATP to 4'-phosphopantetheine, yielding dephospho-CoA (dPCoA) and pyrophosphate.</text>
</comment>
<comment type="catalytic activity">
    <reaction evidence="1">
        <text>(R)-4'-phosphopantetheine + ATP + H(+) = 3'-dephospho-CoA + diphosphate</text>
        <dbReference type="Rhea" id="RHEA:19801"/>
        <dbReference type="ChEBI" id="CHEBI:15378"/>
        <dbReference type="ChEBI" id="CHEBI:30616"/>
        <dbReference type="ChEBI" id="CHEBI:33019"/>
        <dbReference type="ChEBI" id="CHEBI:57328"/>
        <dbReference type="ChEBI" id="CHEBI:61723"/>
        <dbReference type="EC" id="2.7.7.3"/>
    </reaction>
</comment>
<comment type="cofactor">
    <cofactor evidence="1">
        <name>Mg(2+)</name>
        <dbReference type="ChEBI" id="CHEBI:18420"/>
    </cofactor>
</comment>
<comment type="pathway">
    <text evidence="1">Cofactor biosynthesis; coenzyme A biosynthesis; CoA from (R)-pantothenate: step 4/5.</text>
</comment>
<comment type="subunit">
    <text evidence="1">Homohexamer.</text>
</comment>
<comment type="subcellular location">
    <subcellularLocation>
        <location evidence="1">Cytoplasm</location>
    </subcellularLocation>
</comment>
<comment type="similarity">
    <text evidence="1">Belongs to the bacterial CoaD family.</text>
</comment>
<protein>
    <recommendedName>
        <fullName evidence="1">Phosphopantetheine adenylyltransferase</fullName>
        <ecNumber evidence="1">2.7.7.3</ecNumber>
    </recommendedName>
    <alternativeName>
        <fullName evidence="1">Dephospho-CoA pyrophosphorylase</fullName>
    </alternativeName>
    <alternativeName>
        <fullName evidence="1">Pantetheine-phosphate adenylyltransferase</fullName>
        <shortName evidence="1">PPAT</shortName>
    </alternativeName>
</protein>
<keyword id="KW-0067">ATP-binding</keyword>
<keyword id="KW-0173">Coenzyme A biosynthesis</keyword>
<keyword id="KW-0963">Cytoplasm</keyword>
<keyword id="KW-0460">Magnesium</keyword>
<keyword id="KW-0547">Nucleotide-binding</keyword>
<keyword id="KW-0548">Nucleotidyltransferase</keyword>
<keyword id="KW-0808">Transferase</keyword>
<name>COAD_BURCH</name>